<comment type="function">
    <text evidence="1">Galactosyltransferase involved in the synthesis of cholesterol glycolipids, which are formed by the use of host-derived cholesterol and have been shown to be immunogenic, and possibly contribute to Lyme disease pathogenesis (PubMed:34061884). Catalyzes the formation of cholesteryl beta-D-galactopyranoside (CGal) from cholesterol and UDP-alpha-D-galactose (PubMed:34061884). Cannot use GDP-mannose (PubMed:34061884).</text>
</comment>
<comment type="catalytic activity">
    <reaction evidence="1">
        <text>cholesterol + UDP-alpha-D-galactose = cholesteryl 3-beta-D-galactoside + UDP + H(+)</text>
        <dbReference type="Rhea" id="RHEA:77955"/>
        <dbReference type="ChEBI" id="CHEBI:15378"/>
        <dbReference type="ChEBI" id="CHEBI:16113"/>
        <dbReference type="ChEBI" id="CHEBI:58223"/>
        <dbReference type="ChEBI" id="CHEBI:66914"/>
        <dbReference type="ChEBI" id="CHEBI:189066"/>
    </reaction>
    <physiologicalReaction direction="left-to-right" evidence="1">
        <dbReference type="Rhea" id="RHEA:77956"/>
    </physiologicalReaction>
</comment>
<comment type="pathway">
    <text evidence="1">Glycolipid biosynthesis.</text>
</comment>
<comment type="disruption phenotype">
    <text evidence="1">Mutations in the predicted active site result in a recombinant protein that is unable to catalyze the formation of the cholesterol glycolipid.</text>
</comment>
<comment type="similarity">
    <text evidence="2">Belongs to the glycosyltransferase 2 family.</text>
</comment>
<protein>
    <recommendedName>
        <fullName evidence="2">Cholesterol galactosyltransferase</fullName>
        <ecNumber evidence="1">2.4.1.-</ecNumber>
    </recommendedName>
</protein>
<gene>
    <name evidence="3" type="ordered locus">BB_0572</name>
</gene>
<reference key="1">
    <citation type="journal article" date="1997" name="Nature">
        <title>Genomic sequence of a Lyme disease spirochaete, Borrelia burgdorferi.</title>
        <authorList>
            <person name="Fraser C.M."/>
            <person name="Casjens S."/>
            <person name="Huang W.M."/>
            <person name="Sutton G.G."/>
            <person name="Clayton R.A."/>
            <person name="Lathigra R."/>
            <person name="White O."/>
            <person name="Ketchum K.A."/>
            <person name="Dodson R.J."/>
            <person name="Hickey E.K."/>
            <person name="Gwinn M.L."/>
            <person name="Dougherty B.A."/>
            <person name="Tomb J.-F."/>
            <person name="Fleischmann R.D."/>
            <person name="Richardson D.L."/>
            <person name="Peterson J.D."/>
            <person name="Kerlavage A.R."/>
            <person name="Quackenbush J."/>
            <person name="Salzberg S.L."/>
            <person name="Hanson M."/>
            <person name="van Vugt R."/>
            <person name="Palmer N."/>
            <person name="Adams M.D."/>
            <person name="Gocayne J.D."/>
            <person name="Weidman J.F."/>
            <person name="Utterback T.R."/>
            <person name="Watthey L."/>
            <person name="McDonald L.A."/>
            <person name="Artiach P."/>
            <person name="Bowman C."/>
            <person name="Garland S.A."/>
            <person name="Fujii C."/>
            <person name="Cotton M.D."/>
            <person name="Horst K."/>
            <person name="Roberts K.M."/>
            <person name="Hatch B."/>
            <person name="Smith H.O."/>
            <person name="Venter J.C."/>
        </authorList>
    </citation>
    <scope>NUCLEOTIDE SEQUENCE [LARGE SCALE GENOMIC DNA]</scope>
    <source>
        <strain>ATCC 35210 / DSM 4680 / CIP 102532 / B31</strain>
    </source>
</reference>
<reference key="2">
    <citation type="journal article" date="2021" name="PLoS ONE">
        <title>Identification and functional analysis of a galactosyltransferase capable of cholesterol glycolipid formation in the Lyme disease spirochete Borrelia burgdorferi.</title>
        <authorList>
            <person name="Hove P.R."/>
            <person name="Magunda F."/>
            <person name="de Mello Marques M.A."/>
            <person name="Islam M.N."/>
            <person name="Harton M.R."/>
            <person name="Jackson M."/>
            <person name="Belisle J.T."/>
        </authorList>
    </citation>
    <scope>FUNCTION</scope>
    <scope>CATALYTIC ACTIVITY</scope>
    <scope>PATHWAY</scope>
    <scope>DISRUPTION PHENOTYPE</scope>
    <scope>IDENTIFICATION BY MASS SPECTROMETRY</scope>
    <source>
        <strain>ATCC 35210 / DSM 4680 / CIP 102532 / B31</strain>
    </source>
</reference>
<proteinExistence type="evidence at protein level"/>
<accession>O51519</accession>
<evidence type="ECO:0000269" key="1">
    <source>
    </source>
</evidence>
<evidence type="ECO:0000305" key="2"/>
<evidence type="ECO:0000312" key="3">
    <source>
        <dbReference type="EMBL" id="AAC66931.1"/>
    </source>
</evidence>
<keyword id="KW-0328">Glycosyltransferase</keyword>
<keyword id="KW-0444">Lipid biosynthesis</keyword>
<keyword id="KW-0443">Lipid metabolism</keyword>
<keyword id="KW-1185">Reference proteome</keyword>
<keyword id="KW-0808">Transferase</keyword>
<name>CGALT_BORBU</name>
<organism>
    <name type="scientific">Borreliella burgdorferi (strain ATCC 35210 / DSM 4680 / CIP 102532 / B31)</name>
    <name type="common">Borrelia burgdorferi</name>
    <dbReference type="NCBI Taxonomy" id="224326"/>
    <lineage>
        <taxon>Bacteria</taxon>
        <taxon>Pseudomonadati</taxon>
        <taxon>Spirochaetota</taxon>
        <taxon>Spirochaetia</taxon>
        <taxon>Spirochaetales</taxon>
        <taxon>Borreliaceae</taxon>
        <taxon>Borreliella</taxon>
    </lineage>
</organism>
<feature type="chain" id="PRO_0000459645" description="Cholesterol galactosyltransferase">
    <location>
        <begin position="1"/>
        <end position="358"/>
    </location>
</feature>
<dbReference type="EC" id="2.4.1.-" evidence="1"/>
<dbReference type="EMBL" id="AE000783">
    <property type="protein sequence ID" value="AAC66931.1"/>
    <property type="molecule type" value="Genomic_DNA"/>
</dbReference>
<dbReference type="PIR" id="C70171">
    <property type="entry name" value="C70171"/>
</dbReference>
<dbReference type="RefSeq" id="NP_212706.1">
    <property type="nucleotide sequence ID" value="NC_001318.1"/>
</dbReference>
<dbReference type="RefSeq" id="WP_002665235.1">
    <property type="nucleotide sequence ID" value="NC_001318.1"/>
</dbReference>
<dbReference type="SMR" id="O51519"/>
<dbReference type="STRING" id="224326.BB_0572"/>
<dbReference type="CAZy" id="GT2">
    <property type="family name" value="Glycosyltransferase Family 2"/>
</dbReference>
<dbReference type="PaxDb" id="224326-BB_0572"/>
<dbReference type="EnsemblBacteria" id="AAC66931">
    <property type="protein sequence ID" value="AAC66931"/>
    <property type="gene ID" value="BB_0572"/>
</dbReference>
<dbReference type="KEGG" id="bbu:BB_0572"/>
<dbReference type="PATRIC" id="fig|224326.49.peg.963"/>
<dbReference type="HOGENOM" id="CLU_025996_25_1_12"/>
<dbReference type="OrthoDB" id="305760at2"/>
<dbReference type="Proteomes" id="UP000001807">
    <property type="component" value="Chromosome"/>
</dbReference>
<dbReference type="GO" id="GO:0016757">
    <property type="term" value="F:glycosyltransferase activity"/>
    <property type="evidence" value="ECO:0007669"/>
    <property type="project" value="UniProtKB-KW"/>
</dbReference>
<dbReference type="GO" id="GO:0006629">
    <property type="term" value="P:lipid metabolic process"/>
    <property type="evidence" value="ECO:0007669"/>
    <property type="project" value="UniProtKB-KW"/>
</dbReference>
<dbReference type="CDD" id="cd00761">
    <property type="entry name" value="Glyco_tranf_GTA_type"/>
    <property type="match status" value="1"/>
</dbReference>
<dbReference type="Gene3D" id="3.90.550.10">
    <property type="entry name" value="Spore Coat Polysaccharide Biosynthesis Protein SpsA, Chain A"/>
    <property type="match status" value="1"/>
</dbReference>
<dbReference type="InterPro" id="IPR001173">
    <property type="entry name" value="Glyco_trans_2-like"/>
</dbReference>
<dbReference type="InterPro" id="IPR029044">
    <property type="entry name" value="Nucleotide-diphossugar_trans"/>
</dbReference>
<dbReference type="PANTHER" id="PTHR22916">
    <property type="entry name" value="GLYCOSYLTRANSFERASE"/>
    <property type="match status" value="1"/>
</dbReference>
<dbReference type="PANTHER" id="PTHR22916:SF51">
    <property type="entry name" value="GLYCOSYLTRANSFERASE EPSH-RELATED"/>
    <property type="match status" value="1"/>
</dbReference>
<dbReference type="Pfam" id="PF00535">
    <property type="entry name" value="Glycos_transf_2"/>
    <property type="match status" value="1"/>
</dbReference>
<dbReference type="SUPFAM" id="SSF53448">
    <property type="entry name" value="Nucleotide-diphospho-sugar transferases"/>
    <property type="match status" value="1"/>
</dbReference>
<sequence length="358" mass="42106">MEDIVHKYKVSVIICFFNSAETLDAMIKDAVNQTLKDKEIILIDDGSYDGSLEIAEKYANKYSFIKIFSQKNMGLSASRDKGLSEAQGEYVIYWDGDDSVESTMLEVLYNRAKADNSDIVCSQFYIYFLAINVKRKSLLPFPNYPLTGKEAFKNLLFTVYATFGRKNFVVGTLWDKLIRRELILKNNIRQQNVVFEDIVFVMQIFLKASKVSFVNNYFYTNFQRMGSMSSSISVLHKSKLSLNTMETLLKREGIFNECQNLYKKFFLQFYYFISFKQIYIISWNISDKLVYRAYKEKLISVLDEIKGLSEFQDCYEYAKSFGFNEIQILPRIMLKIWNFSSRLYVNFSIFIYKFFIKN</sequence>